<dbReference type="EC" id="2.7.7.-" evidence="1"/>
<dbReference type="EC" id="2.7.7.108" evidence="1"/>
<dbReference type="EMBL" id="CP000563">
    <property type="protein sequence ID" value="ABN63529.1"/>
    <property type="molecule type" value="Genomic_DNA"/>
</dbReference>
<dbReference type="RefSeq" id="WP_011848096.1">
    <property type="nucleotide sequence ID" value="NC_009052.1"/>
</dbReference>
<dbReference type="SMR" id="A3D9W6"/>
<dbReference type="STRING" id="325240.Sbal_4063"/>
<dbReference type="KEGG" id="sbl:Sbal_4063"/>
<dbReference type="HOGENOM" id="CLU_010245_4_1_6"/>
<dbReference type="OrthoDB" id="9776281at2"/>
<dbReference type="Proteomes" id="UP000001557">
    <property type="component" value="Chromosome"/>
</dbReference>
<dbReference type="GO" id="GO:0070733">
    <property type="term" value="F:AMPylase activity"/>
    <property type="evidence" value="ECO:0007669"/>
    <property type="project" value="RHEA"/>
</dbReference>
<dbReference type="GO" id="GO:0005524">
    <property type="term" value="F:ATP binding"/>
    <property type="evidence" value="ECO:0007669"/>
    <property type="project" value="UniProtKB-UniRule"/>
</dbReference>
<dbReference type="GO" id="GO:0000287">
    <property type="term" value="F:magnesium ion binding"/>
    <property type="evidence" value="ECO:0007669"/>
    <property type="project" value="UniProtKB-UniRule"/>
</dbReference>
<dbReference type="HAMAP" id="MF_00692">
    <property type="entry name" value="YdiU_SelO"/>
    <property type="match status" value="1"/>
</dbReference>
<dbReference type="InterPro" id="IPR003846">
    <property type="entry name" value="SelO"/>
</dbReference>
<dbReference type="NCBIfam" id="NF000658">
    <property type="entry name" value="PRK00029.1"/>
    <property type="match status" value="1"/>
</dbReference>
<dbReference type="PANTHER" id="PTHR32057">
    <property type="entry name" value="PROTEIN ADENYLYLTRANSFERASE SELO, MITOCHONDRIAL"/>
    <property type="match status" value="1"/>
</dbReference>
<dbReference type="PANTHER" id="PTHR32057:SF14">
    <property type="entry name" value="PROTEIN ADENYLYLTRANSFERASE SELO, MITOCHONDRIAL"/>
    <property type="match status" value="1"/>
</dbReference>
<dbReference type="Pfam" id="PF02696">
    <property type="entry name" value="SelO"/>
    <property type="match status" value="1"/>
</dbReference>
<name>SELO_SHEB5</name>
<keyword id="KW-0067">ATP-binding</keyword>
<keyword id="KW-0460">Magnesium</keyword>
<keyword id="KW-0464">Manganese</keyword>
<keyword id="KW-0479">Metal-binding</keyword>
<keyword id="KW-0547">Nucleotide-binding</keyword>
<keyword id="KW-0548">Nucleotidyltransferase</keyword>
<keyword id="KW-1185">Reference proteome</keyword>
<keyword id="KW-0808">Transferase</keyword>
<evidence type="ECO:0000255" key="1">
    <source>
        <dbReference type="HAMAP-Rule" id="MF_00692"/>
    </source>
</evidence>
<organism>
    <name type="scientific">Shewanella baltica (strain OS155 / ATCC BAA-1091)</name>
    <dbReference type="NCBI Taxonomy" id="325240"/>
    <lineage>
        <taxon>Bacteria</taxon>
        <taxon>Pseudomonadati</taxon>
        <taxon>Pseudomonadota</taxon>
        <taxon>Gammaproteobacteria</taxon>
        <taxon>Alteromonadales</taxon>
        <taxon>Shewanellaceae</taxon>
        <taxon>Shewanella</taxon>
    </lineage>
</organism>
<feature type="chain" id="PRO_1000045256" description="Protein nucleotidyltransferase YdiU">
    <location>
        <begin position="1"/>
        <end position="484"/>
    </location>
</feature>
<feature type="active site" description="Proton acceptor" evidence="1">
    <location>
        <position position="244"/>
    </location>
</feature>
<feature type="binding site" evidence="1">
    <location>
        <position position="81"/>
    </location>
    <ligand>
        <name>ATP</name>
        <dbReference type="ChEBI" id="CHEBI:30616"/>
    </ligand>
</feature>
<feature type="binding site" evidence="1">
    <location>
        <position position="83"/>
    </location>
    <ligand>
        <name>ATP</name>
        <dbReference type="ChEBI" id="CHEBI:30616"/>
    </ligand>
</feature>
<feature type="binding site" evidence="1">
    <location>
        <position position="84"/>
    </location>
    <ligand>
        <name>ATP</name>
        <dbReference type="ChEBI" id="CHEBI:30616"/>
    </ligand>
</feature>
<feature type="binding site" evidence="1">
    <location>
        <position position="103"/>
    </location>
    <ligand>
        <name>ATP</name>
        <dbReference type="ChEBI" id="CHEBI:30616"/>
    </ligand>
</feature>
<feature type="binding site" evidence="1">
    <location>
        <position position="115"/>
    </location>
    <ligand>
        <name>ATP</name>
        <dbReference type="ChEBI" id="CHEBI:30616"/>
    </ligand>
</feature>
<feature type="binding site" evidence="1">
    <location>
        <position position="116"/>
    </location>
    <ligand>
        <name>ATP</name>
        <dbReference type="ChEBI" id="CHEBI:30616"/>
    </ligand>
</feature>
<feature type="binding site" evidence="1">
    <location>
        <position position="166"/>
    </location>
    <ligand>
        <name>ATP</name>
        <dbReference type="ChEBI" id="CHEBI:30616"/>
    </ligand>
</feature>
<feature type="binding site" evidence="1">
    <location>
        <position position="173"/>
    </location>
    <ligand>
        <name>ATP</name>
        <dbReference type="ChEBI" id="CHEBI:30616"/>
    </ligand>
</feature>
<feature type="binding site" evidence="1">
    <location>
        <position position="245"/>
    </location>
    <ligand>
        <name>Mg(2+)</name>
        <dbReference type="ChEBI" id="CHEBI:18420"/>
    </ligand>
</feature>
<feature type="binding site" evidence="1">
    <location>
        <position position="254"/>
    </location>
    <ligand>
        <name>ATP</name>
        <dbReference type="ChEBI" id="CHEBI:30616"/>
    </ligand>
</feature>
<feature type="binding site" evidence="1">
    <location>
        <position position="254"/>
    </location>
    <ligand>
        <name>Mg(2+)</name>
        <dbReference type="ChEBI" id="CHEBI:18420"/>
    </ligand>
</feature>
<accession>A3D9W6</accession>
<gene>
    <name evidence="1" type="primary">ydiU</name>
    <name evidence="1" type="synonym">selO</name>
    <name type="ordered locus">Sbal_4063</name>
</gene>
<sequence>MKFKQDFFTQLPEFYSQVYPQGITKPEWLAWSDDAAQLIGLSQPTDELLLGLSGNAAVDGATYYAQVYSGHQFGGYTPRLGDGRSIILGEAIGPNGAWDVALKGGGPTPYSRRGDGRAVMRSAVREFLVSEALHHLHVPTTRALAVIGSDLPVWRESQETAAITVRLARSHIRFGHFEFFCHSERGRADKLIQLLNFTITQHYPHLSCDAAGYKAWFLQVVQDTAKMIAHWQAVGFAHGVMNTDNMSILGDSFDFGPFAFLDTFQEDFICNHSDPEGRYAFGQQPGIGLWNLQRLAQALTPVIPSDDLIAILNQYQEALVQPYLRLMRAKLGLSAVDVPSVEQDKQDLDLIGRFTVLMEKNQLDYTQTWRQLGKLDPTSKHSALRDDFIDVSQFDTWYQAYQQRLGAVADIPAWQTERNSVNPKYILRNYLAQEAIIAVEEGNLAPLHLLQKILTQPFAEHAEHEDLAKRPPDWGQGLIMSCSS</sequence>
<reference key="1">
    <citation type="submission" date="2007-02" db="EMBL/GenBank/DDBJ databases">
        <title>Complete sequence of chromosome of Shewanella baltica OS155.</title>
        <authorList>
            <consortium name="US DOE Joint Genome Institute"/>
            <person name="Copeland A."/>
            <person name="Lucas S."/>
            <person name="Lapidus A."/>
            <person name="Barry K."/>
            <person name="Detter J.C."/>
            <person name="Glavina del Rio T."/>
            <person name="Hammon N."/>
            <person name="Israni S."/>
            <person name="Dalin E."/>
            <person name="Tice H."/>
            <person name="Pitluck S."/>
            <person name="Sims D.R."/>
            <person name="Brettin T."/>
            <person name="Bruce D."/>
            <person name="Han C."/>
            <person name="Tapia R."/>
            <person name="Brainard J."/>
            <person name="Schmutz J."/>
            <person name="Larimer F."/>
            <person name="Land M."/>
            <person name="Hauser L."/>
            <person name="Kyrpides N."/>
            <person name="Mikhailova N."/>
            <person name="Brettar I."/>
            <person name="Klappenbach J."/>
            <person name="Konstantinidis K."/>
            <person name="Rodrigues J."/>
            <person name="Tiedje J."/>
            <person name="Richardson P."/>
        </authorList>
    </citation>
    <scope>NUCLEOTIDE SEQUENCE [LARGE SCALE GENOMIC DNA]</scope>
    <source>
        <strain>OS155 / ATCC BAA-1091</strain>
    </source>
</reference>
<proteinExistence type="inferred from homology"/>
<comment type="function">
    <text evidence="1">Nucleotidyltransferase involved in the post-translational modification of proteins. It can catalyze the addition of adenosine monophosphate (AMP) or uridine monophosphate (UMP) to a protein, resulting in modifications known as AMPylation and UMPylation.</text>
</comment>
<comment type="catalytic activity">
    <reaction evidence="1">
        <text>L-seryl-[protein] + ATP = 3-O-(5'-adenylyl)-L-seryl-[protein] + diphosphate</text>
        <dbReference type="Rhea" id="RHEA:58120"/>
        <dbReference type="Rhea" id="RHEA-COMP:9863"/>
        <dbReference type="Rhea" id="RHEA-COMP:15073"/>
        <dbReference type="ChEBI" id="CHEBI:29999"/>
        <dbReference type="ChEBI" id="CHEBI:30616"/>
        <dbReference type="ChEBI" id="CHEBI:33019"/>
        <dbReference type="ChEBI" id="CHEBI:142516"/>
        <dbReference type="EC" id="2.7.7.108"/>
    </reaction>
</comment>
<comment type="catalytic activity">
    <reaction evidence="1">
        <text>L-threonyl-[protein] + ATP = 3-O-(5'-adenylyl)-L-threonyl-[protein] + diphosphate</text>
        <dbReference type="Rhea" id="RHEA:54292"/>
        <dbReference type="Rhea" id="RHEA-COMP:11060"/>
        <dbReference type="Rhea" id="RHEA-COMP:13847"/>
        <dbReference type="ChEBI" id="CHEBI:30013"/>
        <dbReference type="ChEBI" id="CHEBI:30616"/>
        <dbReference type="ChEBI" id="CHEBI:33019"/>
        <dbReference type="ChEBI" id="CHEBI:138113"/>
        <dbReference type="EC" id="2.7.7.108"/>
    </reaction>
</comment>
<comment type="catalytic activity">
    <reaction evidence="1">
        <text>L-tyrosyl-[protein] + ATP = O-(5'-adenylyl)-L-tyrosyl-[protein] + diphosphate</text>
        <dbReference type="Rhea" id="RHEA:54288"/>
        <dbReference type="Rhea" id="RHEA-COMP:10136"/>
        <dbReference type="Rhea" id="RHEA-COMP:13846"/>
        <dbReference type="ChEBI" id="CHEBI:30616"/>
        <dbReference type="ChEBI" id="CHEBI:33019"/>
        <dbReference type="ChEBI" id="CHEBI:46858"/>
        <dbReference type="ChEBI" id="CHEBI:83624"/>
        <dbReference type="EC" id="2.7.7.108"/>
    </reaction>
</comment>
<comment type="catalytic activity">
    <reaction evidence="1">
        <text>L-histidyl-[protein] + UTP = N(tele)-(5'-uridylyl)-L-histidyl-[protein] + diphosphate</text>
        <dbReference type="Rhea" id="RHEA:83891"/>
        <dbReference type="Rhea" id="RHEA-COMP:9745"/>
        <dbReference type="Rhea" id="RHEA-COMP:20239"/>
        <dbReference type="ChEBI" id="CHEBI:29979"/>
        <dbReference type="ChEBI" id="CHEBI:33019"/>
        <dbReference type="ChEBI" id="CHEBI:46398"/>
        <dbReference type="ChEBI" id="CHEBI:233474"/>
    </reaction>
</comment>
<comment type="catalytic activity">
    <reaction evidence="1">
        <text>L-seryl-[protein] + UTP = O-(5'-uridylyl)-L-seryl-[protein] + diphosphate</text>
        <dbReference type="Rhea" id="RHEA:64604"/>
        <dbReference type="Rhea" id="RHEA-COMP:9863"/>
        <dbReference type="Rhea" id="RHEA-COMP:16635"/>
        <dbReference type="ChEBI" id="CHEBI:29999"/>
        <dbReference type="ChEBI" id="CHEBI:33019"/>
        <dbReference type="ChEBI" id="CHEBI:46398"/>
        <dbReference type="ChEBI" id="CHEBI:156051"/>
    </reaction>
</comment>
<comment type="catalytic activity">
    <reaction evidence="1">
        <text>L-tyrosyl-[protein] + UTP = O-(5'-uridylyl)-L-tyrosyl-[protein] + diphosphate</text>
        <dbReference type="Rhea" id="RHEA:83887"/>
        <dbReference type="Rhea" id="RHEA-COMP:10136"/>
        <dbReference type="Rhea" id="RHEA-COMP:20238"/>
        <dbReference type="ChEBI" id="CHEBI:33019"/>
        <dbReference type="ChEBI" id="CHEBI:46398"/>
        <dbReference type="ChEBI" id="CHEBI:46858"/>
        <dbReference type="ChEBI" id="CHEBI:90602"/>
    </reaction>
</comment>
<comment type="cofactor">
    <cofactor evidence="1">
        <name>Mg(2+)</name>
        <dbReference type="ChEBI" id="CHEBI:18420"/>
    </cofactor>
    <cofactor evidence="1">
        <name>Mn(2+)</name>
        <dbReference type="ChEBI" id="CHEBI:29035"/>
    </cofactor>
</comment>
<comment type="similarity">
    <text evidence="1">Belongs to the SELO family.</text>
</comment>
<protein>
    <recommendedName>
        <fullName evidence="1">Protein nucleotidyltransferase YdiU</fullName>
        <ecNumber evidence="1">2.7.7.-</ecNumber>
    </recommendedName>
    <alternativeName>
        <fullName evidence="1">Protein adenylyltransferase YdiU</fullName>
        <ecNumber evidence="1">2.7.7.108</ecNumber>
    </alternativeName>
    <alternativeName>
        <fullName evidence="1">Protein uridylyltransferase YdiU</fullName>
        <ecNumber evidence="1">2.7.7.-</ecNumber>
    </alternativeName>
</protein>